<sequence length="161" mass="17253">MSKIIQVGMADFKMATAPDKLITAGLGSCIGICLYDKVIKLGSLTHIMLPSSSQAKNASNEAKFADTGLKLAIREMEKNGAQASRLLAKIAGGAQMFKFSGESDIMKIGERNSVAVKENLQLHRIKLLSSDTGGNYGRTIIFDPETGDLLVKTIGHGERII</sequence>
<keyword id="KW-0145">Chemotaxis</keyword>
<keyword id="KW-0378">Hydrolase</keyword>
<keyword id="KW-1185">Reference proteome</keyword>
<evidence type="ECO:0000255" key="1">
    <source>
        <dbReference type="HAMAP-Rule" id="MF_01440"/>
    </source>
</evidence>
<feature type="chain" id="PRO_1000184929" description="Probable chemoreceptor glutamine deamidase CheD">
    <location>
        <begin position="1"/>
        <end position="161"/>
    </location>
</feature>
<protein>
    <recommendedName>
        <fullName evidence="1">Probable chemoreceptor glutamine deamidase CheD</fullName>
        <ecNumber evidence="1">3.5.1.44</ecNumber>
    </recommendedName>
</protein>
<comment type="function">
    <text evidence="1">Probably deamidates glutamine residues to glutamate on methyl-accepting chemotaxis receptors (MCPs), playing an important role in chemotaxis.</text>
</comment>
<comment type="catalytic activity">
    <reaction evidence="1">
        <text>L-glutaminyl-[protein] + H2O = L-glutamyl-[protein] + NH4(+)</text>
        <dbReference type="Rhea" id="RHEA:16441"/>
        <dbReference type="Rhea" id="RHEA-COMP:10207"/>
        <dbReference type="Rhea" id="RHEA-COMP:10208"/>
        <dbReference type="ChEBI" id="CHEBI:15377"/>
        <dbReference type="ChEBI" id="CHEBI:28938"/>
        <dbReference type="ChEBI" id="CHEBI:29973"/>
        <dbReference type="ChEBI" id="CHEBI:30011"/>
        <dbReference type="EC" id="3.5.1.44"/>
    </reaction>
</comment>
<comment type="similarity">
    <text evidence="1">Belongs to the CheD family.</text>
</comment>
<reference key="1">
    <citation type="journal article" date="2010" name="Environ. Microbiol.">
        <title>The genome of Syntrophomonas wolfei: new insights into syntrophic metabolism and biohydrogen production.</title>
        <authorList>
            <person name="Sieber J.R."/>
            <person name="Sims D.R."/>
            <person name="Han C."/>
            <person name="Kim E."/>
            <person name="Lykidis A."/>
            <person name="Lapidus A.L."/>
            <person name="McDonnald E."/>
            <person name="Rohlin L."/>
            <person name="Culley D.E."/>
            <person name="Gunsalus R."/>
            <person name="McInerney M.J."/>
        </authorList>
    </citation>
    <scope>NUCLEOTIDE SEQUENCE [LARGE SCALE GENOMIC DNA]</scope>
    <source>
        <strain>DSM 2245B / Goettingen</strain>
    </source>
</reference>
<proteinExistence type="inferred from homology"/>
<dbReference type="EC" id="3.5.1.44" evidence="1"/>
<dbReference type="EMBL" id="CP000448">
    <property type="protein sequence ID" value="ABI68195.1"/>
    <property type="molecule type" value="Genomic_DNA"/>
</dbReference>
<dbReference type="RefSeq" id="WP_011640300.1">
    <property type="nucleotide sequence ID" value="NC_008346.1"/>
</dbReference>
<dbReference type="SMR" id="Q0AYK9"/>
<dbReference type="STRING" id="335541.Swol_0877"/>
<dbReference type="KEGG" id="swo:Swol_0877"/>
<dbReference type="eggNOG" id="COG1871">
    <property type="taxonomic scope" value="Bacteria"/>
</dbReference>
<dbReference type="HOGENOM" id="CLU_087854_2_0_9"/>
<dbReference type="OrthoDB" id="9807202at2"/>
<dbReference type="Proteomes" id="UP000001968">
    <property type="component" value="Chromosome"/>
</dbReference>
<dbReference type="GO" id="GO:0050568">
    <property type="term" value="F:protein-glutamine glutaminase activity"/>
    <property type="evidence" value="ECO:0007669"/>
    <property type="project" value="UniProtKB-UniRule"/>
</dbReference>
<dbReference type="GO" id="GO:0006935">
    <property type="term" value="P:chemotaxis"/>
    <property type="evidence" value="ECO:0007669"/>
    <property type="project" value="UniProtKB-UniRule"/>
</dbReference>
<dbReference type="CDD" id="cd16352">
    <property type="entry name" value="CheD"/>
    <property type="match status" value="1"/>
</dbReference>
<dbReference type="Gene3D" id="3.30.1330.200">
    <property type="match status" value="1"/>
</dbReference>
<dbReference type="HAMAP" id="MF_01440">
    <property type="entry name" value="CheD"/>
    <property type="match status" value="1"/>
</dbReference>
<dbReference type="InterPro" id="IPR038592">
    <property type="entry name" value="CheD-like_sf"/>
</dbReference>
<dbReference type="InterPro" id="IPR005659">
    <property type="entry name" value="Chemorcpt_Glu_NH3ase_CheD"/>
</dbReference>
<dbReference type="InterPro" id="IPR011324">
    <property type="entry name" value="Cytotoxic_necrot_fac-like_cat"/>
</dbReference>
<dbReference type="PANTHER" id="PTHR35147">
    <property type="entry name" value="CHEMORECEPTOR GLUTAMINE DEAMIDASE CHED-RELATED"/>
    <property type="match status" value="1"/>
</dbReference>
<dbReference type="PANTHER" id="PTHR35147:SF1">
    <property type="entry name" value="CHEMORECEPTOR GLUTAMINE DEAMIDASE CHED-RELATED"/>
    <property type="match status" value="1"/>
</dbReference>
<dbReference type="Pfam" id="PF03975">
    <property type="entry name" value="CheD"/>
    <property type="match status" value="1"/>
</dbReference>
<dbReference type="SUPFAM" id="SSF64438">
    <property type="entry name" value="CNF1/YfiH-like putative cysteine hydrolases"/>
    <property type="match status" value="1"/>
</dbReference>
<organism>
    <name type="scientific">Syntrophomonas wolfei subsp. wolfei (strain DSM 2245B / Goettingen)</name>
    <dbReference type="NCBI Taxonomy" id="335541"/>
    <lineage>
        <taxon>Bacteria</taxon>
        <taxon>Bacillati</taxon>
        <taxon>Bacillota</taxon>
        <taxon>Clostridia</taxon>
        <taxon>Eubacteriales</taxon>
        <taxon>Syntrophomonadaceae</taxon>
        <taxon>Syntrophomonas</taxon>
    </lineage>
</organism>
<name>CHED_SYNWW</name>
<accession>Q0AYK9</accession>
<gene>
    <name evidence="1" type="primary">cheD</name>
    <name type="ordered locus">Swol_0877</name>
</gene>